<organism>
    <name type="scientific">Xenopus laevis</name>
    <name type="common">African clawed frog</name>
    <dbReference type="NCBI Taxonomy" id="8355"/>
    <lineage>
        <taxon>Eukaryota</taxon>
        <taxon>Metazoa</taxon>
        <taxon>Chordata</taxon>
        <taxon>Craniata</taxon>
        <taxon>Vertebrata</taxon>
        <taxon>Euteleostomi</taxon>
        <taxon>Amphibia</taxon>
        <taxon>Batrachia</taxon>
        <taxon>Anura</taxon>
        <taxon>Pipoidea</taxon>
        <taxon>Pipidae</taxon>
        <taxon>Xenopodinae</taxon>
        <taxon>Xenopus</taxon>
        <taxon>Xenopus</taxon>
    </lineage>
</organism>
<reference key="1">
    <citation type="journal article" date="1992" name="Nucleic Acids Res.">
        <title>Evolutionary variation of the CCAAT-binding transcription factor NF-Y.</title>
        <authorList>
            <person name="Li X.-Y."/>
            <person name="Mantovani R."/>
            <person name="Hooft van Huijsduijnen R."/>
            <person name="Andre I."/>
            <person name="Benoist C."/>
            <person name="Mathis D."/>
        </authorList>
    </citation>
    <scope>NUCLEOTIDE SEQUENCE [MRNA]</scope>
</reference>
<sequence length="122" mass="13498">VQECVSEFISFITSEASERCHQEKRKTINGEDILFAMSTLGFDSYVEPLKLYLQKFREAMKGEKGIGGTVTTGDGLGEDLAEEPFTSQIPAGLITTDGQQQNVMVYTTSYQQISGVQQIQFS</sequence>
<keyword id="KW-0010">Activator</keyword>
<keyword id="KW-0238">DNA-binding</keyword>
<keyword id="KW-0539">Nucleus</keyword>
<keyword id="KW-1185">Reference proteome</keyword>
<keyword id="KW-0804">Transcription</keyword>
<keyword id="KW-0805">Transcription regulation</keyword>
<protein>
    <recommendedName>
        <fullName>Nuclear transcription factor Y subunit beta</fullName>
    </recommendedName>
    <alternativeName>
        <fullName>CAAT box DNA-binding protein subunit B</fullName>
    </alternativeName>
    <alternativeName>
        <fullName>Nuclear transcription factor Y subunit B</fullName>
        <shortName>NF-YB</shortName>
    </alternativeName>
</protein>
<gene>
    <name type="primary">nfyb</name>
</gene>
<accession>P25211</accession>
<comment type="function">
    <text>Component of the sequence-specific heterotrimeric transcription factor (NF-Y) which specifically recognizes a 5'-CCAAT-3' box motif found in the promoters of its target genes. NF-Y can function as both an activator and a repressor, depending on its interacting cofactors.</text>
</comment>
<comment type="subunit">
    <text evidence="1">Heterotrimeric transcription factor composed of three components, NF-YA, NF-YB and NF-YC. NF-YB and NF-YC must interact and dimerize for NF-YA association and DNA binding (By similarity).</text>
</comment>
<comment type="subcellular location">
    <subcellularLocation>
        <location>Nucleus</location>
    </subcellularLocation>
</comment>
<comment type="domain">
    <text>Can be divided into 3 domains: the weakly conserved A domain, the highly conserved B domain thought to be involved in subunit interaction and DNA binding, and the Glu-rich C domain.</text>
</comment>
<comment type="similarity">
    <text evidence="2">Belongs to the NFYB/HAP3 subunit family.</text>
</comment>
<dbReference type="EMBL" id="X59709">
    <property type="protein sequence ID" value="CAA42229.1"/>
    <property type="molecule type" value="mRNA"/>
</dbReference>
<dbReference type="PIR" id="S22819">
    <property type="entry name" value="S22819"/>
</dbReference>
<dbReference type="SMR" id="P25211"/>
<dbReference type="AGR" id="Xenbase:XB-GENE-1006110"/>
<dbReference type="Xenbase" id="XB-GENE-1006110">
    <property type="gene designation" value="nfyb.L"/>
</dbReference>
<dbReference type="Proteomes" id="UP000186698">
    <property type="component" value="Unplaced"/>
</dbReference>
<dbReference type="GO" id="GO:0016602">
    <property type="term" value="C:CCAAT-binding factor complex"/>
    <property type="evidence" value="ECO:0007669"/>
    <property type="project" value="InterPro"/>
</dbReference>
<dbReference type="GO" id="GO:0001228">
    <property type="term" value="F:DNA-binding transcription activator activity, RNA polymerase II-specific"/>
    <property type="evidence" value="ECO:0007669"/>
    <property type="project" value="InterPro"/>
</dbReference>
<dbReference type="GO" id="GO:0046982">
    <property type="term" value="F:protein heterodimerization activity"/>
    <property type="evidence" value="ECO:0007669"/>
    <property type="project" value="InterPro"/>
</dbReference>
<dbReference type="GO" id="GO:0000978">
    <property type="term" value="F:RNA polymerase II cis-regulatory region sequence-specific DNA binding"/>
    <property type="evidence" value="ECO:0007669"/>
    <property type="project" value="TreeGrafter"/>
</dbReference>
<dbReference type="CDD" id="cd22907">
    <property type="entry name" value="HFD_NFYB"/>
    <property type="match status" value="1"/>
</dbReference>
<dbReference type="Gene3D" id="1.10.20.10">
    <property type="entry name" value="Histone, subunit A"/>
    <property type="match status" value="1"/>
</dbReference>
<dbReference type="InterPro" id="IPR003958">
    <property type="entry name" value="CBFA_NFYB_domain"/>
</dbReference>
<dbReference type="InterPro" id="IPR009072">
    <property type="entry name" value="Histone-fold"/>
</dbReference>
<dbReference type="InterPro" id="IPR027113">
    <property type="entry name" value="Transc_fact_NFYB/HAP3"/>
</dbReference>
<dbReference type="InterPro" id="IPR003956">
    <property type="entry name" value="Transcrpt_fac_NFYB/HAP3_CS"/>
</dbReference>
<dbReference type="PANTHER" id="PTHR11064">
    <property type="entry name" value="CCAAT-BINDING TRANSCRIPTION FACTOR-RELATED"/>
    <property type="match status" value="1"/>
</dbReference>
<dbReference type="PANTHER" id="PTHR11064:SF9">
    <property type="entry name" value="NUCLEAR TRANSCRIPTION FACTOR Y SUBUNIT BETA"/>
    <property type="match status" value="1"/>
</dbReference>
<dbReference type="Pfam" id="PF00808">
    <property type="entry name" value="CBFD_NFYB_HMF"/>
    <property type="match status" value="1"/>
</dbReference>
<dbReference type="PRINTS" id="PR00615">
    <property type="entry name" value="CCAATSUBUNTA"/>
</dbReference>
<dbReference type="SUPFAM" id="SSF47113">
    <property type="entry name" value="Histone-fold"/>
    <property type="match status" value="1"/>
</dbReference>
<dbReference type="PROSITE" id="PS00685">
    <property type="entry name" value="NFYB_HAP3"/>
    <property type="match status" value="1"/>
</dbReference>
<name>NFYB_XENLA</name>
<proteinExistence type="evidence at transcript level"/>
<evidence type="ECO:0000250" key="1"/>
<evidence type="ECO:0000305" key="2"/>
<feature type="chain" id="PRO_0000204614" description="Nuclear transcription factor Y subunit beta">
    <location>
        <begin position="1" status="less than"/>
        <end position="122"/>
    </location>
</feature>
<feature type="region of interest" description="B domain">
    <location>
        <begin position="1" status="less than"/>
        <end position="57"/>
    </location>
</feature>
<feature type="region of interest" description="Subunit association domain (SAD)" evidence="1">
    <location>
        <begin position="1" status="less than"/>
        <end position="12"/>
    </location>
</feature>
<feature type="region of interest" description="C domain">
    <location>
        <begin position="58"/>
        <end position="122"/>
    </location>
</feature>
<feature type="non-terminal residue">
    <location>
        <position position="1"/>
    </location>
</feature>